<protein>
    <recommendedName>
        <fullName evidence="1">tRNA (guanine(26)-N(2))-dimethyltransferase</fullName>
        <ecNumber evidence="1">2.1.1.216</ecNumber>
    </recommendedName>
    <alternativeName>
        <fullName evidence="1">tRNA 2,2-dimethylguanosine-26 methyltransferase</fullName>
    </alternativeName>
    <alternativeName>
        <fullName evidence="1">tRNA(guanine-26,N(2)-N(2)) methyltransferase</fullName>
    </alternativeName>
    <alternativeName>
        <fullName evidence="1">tRNA(m(2,2)G26)dimethyltransferase</fullName>
    </alternativeName>
</protein>
<evidence type="ECO:0000255" key="1">
    <source>
        <dbReference type="HAMAP-Rule" id="MF_00290"/>
    </source>
</evidence>
<accession>A3MTQ5</accession>
<feature type="chain" id="PRO_1000114981" description="tRNA (guanine(26)-N(2))-dimethyltransferase">
    <location>
        <begin position="1"/>
        <end position="358"/>
    </location>
</feature>
<feature type="domain" description="Trm1 methyltransferase" evidence="1">
    <location>
        <begin position="5"/>
        <end position="354"/>
    </location>
</feature>
<feature type="binding site" evidence="1">
    <location>
        <position position="39"/>
    </location>
    <ligand>
        <name>S-adenosyl-L-methionine</name>
        <dbReference type="ChEBI" id="CHEBI:59789"/>
    </ligand>
</feature>
<feature type="binding site" evidence="1">
    <location>
        <position position="69"/>
    </location>
    <ligand>
        <name>S-adenosyl-L-methionine</name>
        <dbReference type="ChEBI" id="CHEBI:59789"/>
    </ligand>
</feature>
<feature type="binding site" evidence="1">
    <location>
        <position position="87"/>
    </location>
    <ligand>
        <name>S-adenosyl-L-methionine</name>
        <dbReference type="ChEBI" id="CHEBI:59789"/>
    </ligand>
</feature>
<feature type="binding site" evidence="1">
    <location>
        <position position="113"/>
    </location>
    <ligand>
        <name>S-adenosyl-L-methionine</name>
        <dbReference type="ChEBI" id="CHEBI:59789"/>
    </ligand>
</feature>
<feature type="binding site" evidence="1">
    <location>
        <position position="114"/>
    </location>
    <ligand>
        <name>S-adenosyl-L-methionine</name>
        <dbReference type="ChEBI" id="CHEBI:59789"/>
    </ligand>
</feature>
<name>TRM1_PYRCJ</name>
<dbReference type="EC" id="2.1.1.216" evidence="1"/>
<dbReference type="EMBL" id="CP000561">
    <property type="protein sequence ID" value="ABO08022.1"/>
    <property type="molecule type" value="Genomic_DNA"/>
</dbReference>
<dbReference type="RefSeq" id="WP_011849280.1">
    <property type="nucleotide sequence ID" value="NC_009073.1"/>
</dbReference>
<dbReference type="SMR" id="A3MTQ5"/>
<dbReference type="STRING" id="410359.Pcal_0595"/>
<dbReference type="GeneID" id="4908328"/>
<dbReference type="KEGG" id="pcl:Pcal_0595"/>
<dbReference type="eggNOG" id="arCOG01219">
    <property type="taxonomic scope" value="Archaea"/>
</dbReference>
<dbReference type="HOGENOM" id="CLU_010862_5_1_2"/>
<dbReference type="OrthoDB" id="372177at2157"/>
<dbReference type="Proteomes" id="UP000001431">
    <property type="component" value="Chromosome"/>
</dbReference>
<dbReference type="GO" id="GO:0160104">
    <property type="term" value="F:tRNA (guanine(26)-N2)-dimethyltransferase activity"/>
    <property type="evidence" value="ECO:0007669"/>
    <property type="project" value="UniProtKB-UniRule"/>
</dbReference>
<dbReference type="GO" id="GO:0000049">
    <property type="term" value="F:tRNA binding"/>
    <property type="evidence" value="ECO:0007669"/>
    <property type="project" value="UniProtKB-KW"/>
</dbReference>
<dbReference type="GO" id="GO:0002940">
    <property type="term" value="P:tRNA N2-guanine methylation"/>
    <property type="evidence" value="ECO:0007669"/>
    <property type="project" value="TreeGrafter"/>
</dbReference>
<dbReference type="CDD" id="cd02440">
    <property type="entry name" value="AdoMet_MTases"/>
    <property type="match status" value="1"/>
</dbReference>
<dbReference type="Gene3D" id="3.30.56.70">
    <property type="entry name" value="N2,N2-dimethylguanosine tRNA methyltransferase, C-terminal domain"/>
    <property type="match status" value="1"/>
</dbReference>
<dbReference type="Gene3D" id="3.40.50.150">
    <property type="entry name" value="Vaccinia Virus protein VP39"/>
    <property type="match status" value="1"/>
</dbReference>
<dbReference type="HAMAP" id="MF_00290">
    <property type="entry name" value="tRNA_dimethyltr_TRM1"/>
    <property type="match status" value="1"/>
</dbReference>
<dbReference type="InterPro" id="IPR029063">
    <property type="entry name" value="SAM-dependent_MTases_sf"/>
</dbReference>
<dbReference type="InterPro" id="IPR002905">
    <property type="entry name" value="Trm1"/>
</dbReference>
<dbReference type="InterPro" id="IPR022923">
    <property type="entry name" value="TRM1_arc_bac"/>
</dbReference>
<dbReference type="InterPro" id="IPR042296">
    <property type="entry name" value="tRNA_met_Trm1_C"/>
</dbReference>
<dbReference type="PANTHER" id="PTHR10631">
    <property type="entry name" value="N 2 ,N 2 -DIMETHYLGUANOSINE TRNA METHYLTRANSFERASE"/>
    <property type="match status" value="1"/>
</dbReference>
<dbReference type="PANTHER" id="PTHR10631:SF3">
    <property type="entry name" value="TRNA (GUANINE(26)-N(2))-DIMETHYLTRANSFERASE"/>
    <property type="match status" value="1"/>
</dbReference>
<dbReference type="Pfam" id="PF02005">
    <property type="entry name" value="TRM"/>
    <property type="match status" value="1"/>
</dbReference>
<dbReference type="SUPFAM" id="SSF53335">
    <property type="entry name" value="S-adenosyl-L-methionine-dependent methyltransferases"/>
    <property type="match status" value="1"/>
</dbReference>
<dbReference type="PROSITE" id="PS51626">
    <property type="entry name" value="SAM_MT_TRM1"/>
    <property type="match status" value="1"/>
</dbReference>
<comment type="function">
    <text evidence="1">Dimethylates a single guanine residue at position 26 of a number of tRNAs using S-adenosyl-L-methionine as donor of the methyl groups.</text>
</comment>
<comment type="catalytic activity">
    <reaction evidence="1">
        <text>guanosine(26) in tRNA + 2 S-adenosyl-L-methionine = N(2)-dimethylguanosine(26) in tRNA + 2 S-adenosyl-L-homocysteine + 2 H(+)</text>
        <dbReference type="Rhea" id="RHEA:43140"/>
        <dbReference type="Rhea" id="RHEA-COMP:10359"/>
        <dbReference type="Rhea" id="RHEA-COMP:10360"/>
        <dbReference type="ChEBI" id="CHEBI:15378"/>
        <dbReference type="ChEBI" id="CHEBI:57856"/>
        <dbReference type="ChEBI" id="CHEBI:59789"/>
        <dbReference type="ChEBI" id="CHEBI:74269"/>
        <dbReference type="ChEBI" id="CHEBI:74513"/>
        <dbReference type="EC" id="2.1.1.216"/>
    </reaction>
</comment>
<comment type="similarity">
    <text evidence="1">Belongs to the class I-like SAM-binding methyltransferase superfamily. Trm1 family.</text>
</comment>
<keyword id="KW-0489">Methyltransferase</keyword>
<keyword id="KW-0694">RNA-binding</keyword>
<keyword id="KW-0949">S-adenosyl-L-methionine</keyword>
<keyword id="KW-0808">Transferase</keyword>
<keyword id="KW-0819">tRNA processing</keyword>
<keyword id="KW-0820">tRNA-binding</keyword>
<proteinExistence type="inferred from homology"/>
<gene>
    <name evidence="1" type="primary">trm1</name>
    <name type="ordered locus">Pcal_0595</name>
</gene>
<reference key="1">
    <citation type="submission" date="2007-02" db="EMBL/GenBank/DDBJ databases">
        <title>Complete sequence of Pyrobaculum calidifontis JCM 11548.</title>
        <authorList>
            <consortium name="US DOE Joint Genome Institute"/>
            <person name="Copeland A."/>
            <person name="Lucas S."/>
            <person name="Lapidus A."/>
            <person name="Barry K."/>
            <person name="Glavina del Rio T."/>
            <person name="Dalin E."/>
            <person name="Tice H."/>
            <person name="Pitluck S."/>
            <person name="Chain P."/>
            <person name="Malfatti S."/>
            <person name="Shin M."/>
            <person name="Vergez L."/>
            <person name="Schmutz J."/>
            <person name="Larimer F."/>
            <person name="Land M."/>
            <person name="Hauser L."/>
            <person name="Kyrpides N."/>
            <person name="Mikhailova N."/>
            <person name="Cozen A.E."/>
            <person name="Fitz-Gibbon S.T."/>
            <person name="House C.H."/>
            <person name="Saltikov C."/>
            <person name="Lowe T.M."/>
            <person name="Richardson P."/>
        </authorList>
    </citation>
    <scope>NUCLEOTIDE SEQUENCE [LARGE SCALE GENOMIC DNA]</scope>
    <source>
        <strain>DSM 21063 / JCM 11548 / VA1</strain>
    </source>
</reference>
<sequence length="358" mass="40121">MDDYVIRREGKAVFYAPNPKKYDIYSAPVFYNPAMEKNRTLSVLLLKVAGAQMGGGLTVCEPLSGTGIRGIRYVIESGVVGKLILNDLSKEAVHVIQKNLSINGVEADVYNEDANVLLHKLRGQCDVVDVDPFGSPAPFLSAAFRALKNEGIVCATATDTAVLVGRYPRKCLRRYGSVIRKSPFYLEMGLRNLVGYVARIAASEDFAIRPLLSYWEGHYFRTCVYAVKSAKDADDMLQRDVGYVEYRRYRKVTRRQSEYTSGPVWIGELGDPSIAFFMAREGQYSDFLKLLEEEYSVSLPWFYKLPEFAVDGKSPTLEEAMAALRRAGVYAARTHMASDGFKAEATYGEVERVLRRVT</sequence>
<organism>
    <name type="scientific">Pyrobaculum calidifontis (strain DSM 21063 / JCM 11548 / VA1)</name>
    <dbReference type="NCBI Taxonomy" id="410359"/>
    <lineage>
        <taxon>Archaea</taxon>
        <taxon>Thermoproteota</taxon>
        <taxon>Thermoprotei</taxon>
        <taxon>Thermoproteales</taxon>
        <taxon>Thermoproteaceae</taxon>
        <taxon>Pyrobaculum</taxon>
    </lineage>
</organism>